<feature type="chain" id="PRO_0000409071" description="UDP-glycosyltransferase 72C1">
    <location>
        <begin position="1"/>
        <end position="457"/>
    </location>
</feature>
<feature type="binding site" evidence="1">
    <location>
        <position position="272"/>
    </location>
    <ligand>
        <name>UDP-alpha-D-glucose</name>
        <dbReference type="ChEBI" id="CHEBI:58885"/>
    </ligand>
</feature>
<feature type="binding site" evidence="1">
    <location>
        <begin position="343"/>
        <end position="344"/>
    </location>
    <ligand>
        <name>UDP-alpha-D-glucose</name>
        <dbReference type="ChEBI" id="CHEBI:58885"/>
    </ligand>
</feature>
<feature type="binding site" evidence="1">
    <location>
        <begin position="361"/>
        <end position="369"/>
    </location>
    <ligand>
        <name>UDP-alpha-D-glucose</name>
        <dbReference type="ChEBI" id="CHEBI:58885"/>
    </ligand>
</feature>
<feature type="binding site" evidence="1">
    <location>
        <begin position="383"/>
        <end position="386"/>
    </location>
    <ligand>
        <name>UDP-alpha-D-glucose</name>
        <dbReference type="ChEBI" id="CHEBI:58885"/>
    </ligand>
</feature>
<keyword id="KW-0328">Glycosyltransferase</keyword>
<keyword id="KW-1185">Reference proteome</keyword>
<keyword id="KW-0808">Transferase</keyword>
<gene>
    <name type="primary">UGT72C1</name>
    <name type="ordered locus">At4g36770</name>
    <name type="ORF">AP22.28</name>
    <name type="ORF">C7A10.590</name>
</gene>
<reference key="1">
    <citation type="journal article" date="1998" name="Nature">
        <title>Analysis of 1.9 Mb of contiguous sequence from chromosome 4 of Arabidopsis thaliana.</title>
        <authorList>
            <person name="Bevan M."/>
            <person name="Bancroft I."/>
            <person name="Bent E."/>
            <person name="Love K."/>
            <person name="Goodman H.M."/>
            <person name="Dean C."/>
            <person name="Bergkamp R."/>
            <person name="Dirkse W."/>
            <person name="van Staveren M."/>
            <person name="Stiekema W."/>
            <person name="Drost L."/>
            <person name="Ridley P."/>
            <person name="Hudson S.-A."/>
            <person name="Patel K."/>
            <person name="Murphy G."/>
            <person name="Piffanelli P."/>
            <person name="Wedler H."/>
            <person name="Wedler E."/>
            <person name="Wambutt R."/>
            <person name="Weitzenegger T."/>
            <person name="Pohl T."/>
            <person name="Terryn N."/>
            <person name="Gielen J."/>
            <person name="Villarroel R."/>
            <person name="De Clercq R."/>
            <person name="van Montagu M."/>
            <person name="Lecharny A."/>
            <person name="Aubourg S."/>
            <person name="Gy I."/>
            <person name="Kreis M."/>
            <person name="Lao N."/>
            <person name="Kavanagh T."/>
            <person name="Hempel S."/>
            <person name="Kotter P."/>
            <person name="Entian K.-D."/>
            <person name="Rieger M."/>
            <person name="Schaefer M."/>
            <person name="Funk B."/>
            <person name="Mueller-Auer S."/>
            <person name="Silvey M."/>
            <person name="James R."/>
            <person name="Monfort A."/>
            <person name="Pons A."/>
            <person name="Puigdomenech P."/>
            <person name="Douka A."/>
            <person name="Voukelatou E."/>
            <person name="Milioni D."/>
            <person name="Hatzopoulos P."/>
            <person name="Piravandi E."/>
            <person name="Obermaier B."/>
            <person name="Hilbert H."/>
            <person name="Duesterhoeft A."/>
            <person name="Moores T."/>
            <person name="Jones J.D.G."/>
            <person name="Eneva T."/>
            <person name="Palme K."/>
            <person name="Benes V."/>
            <person name="Rechmann S."/>
            <person name="Ansorge W."/>
            <person name="Cooke R."/>
            <person name="Berger C."/>
            <person name="Delseny M."/>
            <person name="Voet M."/>
            <person name="Volckaert G."/>
            <person name="Mewes H.-W."/>
            <person name="Klosterman S."/>
            <person name="Schueller C."/>
            <person name="Chalwatzis N."/>
        </authorList>
    </citation>
    <scope>NUCLEOTIDE SEQUENCE [LARGE SCALE GENOMIC DNA]</scope>
    <source>
        <strain>cv. Columbia</strain>
    </source>
</reference>
<reference key="2">
    <citation type="journal article" date="1999" name="Nature">
        <title>Sequence and analysis of chromosome 4 of the plant Arabidopsis thaliana.</title>
        <authorList>
            <person name="Mayer K.F.X."/>
            <person name="Schueller C."/>
            <person name="Wambutt R."/>
            <person name="Murphy G."/>
            <person name="Volckaert G."/>
            <person name="Pohl T."/>
            <person name="Duesterhoeft A."/>
            <person name="Stiekema W."/>
            <person name="Entian K.-D."/>
            <person name="Terryn N."/>
            <person name="Harris B."/>
            <person name="Ansorge W."/>
            <person name="Brandt P."/>
            <person name="Grivell L.A."/>
            <person name="Rieger M."/>
            <person name="Weichselgartner M."/>
            <person name="de Simone V."/>
            <person name="Obermaier B."/>
            <person name="Mache R."/>
            <person name="Mueller M."/>
            <person name="Kreis M."/>
            <person name="Delseny M."/>
            <person name="Puigdomenech P."/>
            <person name="Watson M."/>
            <person name="Schmidtheini T."/>
            <person name="Reichert B."/>
            <person name="Portetelle D."/>
            <person name="Perez-Alonso M."/>
            <person name="Boutry M."/>
            <person name="Bancroft I."/>
            <person name="Vos P."/>
            <person name="Hoheisel J."/>
            <person name="Zimmermann W."/>
            <person name="Wedler H."/>
            <person name="Ridley P."/>
            <person name="Langham S.-A."/>
            <person name="McCullagh B."/>
            <person name="Bilham L."/>
            <person name="Robben J."/>
            <person name="van der Schueren J."/>
            <person name="Grymonprez B."/>
            <person name="Chuang Y.-J."/>
            <person name="Vandenbussche F."/>
            <person name="Braeken M."/>
            <person name="Weltjens I."/>
            <person name="Voet M."/>
            <person name="Bastiaens I."/>
            <person name="Aert R."/>
            <person name="Defoor E."/>
            <person name="Weitzenegger T."/>
            <person name="Bothe G."/>
            <person name="Ramsperger U."/>
            <person name="Hilbert H."/>
            <person name="Braun M."/>
            <person name="Holzer E."/>
            <person name="Brandt A."/>
            <person name="Peters S."/>
            <person name="van Staveren M."/>
            <person name="Dirkse W."/>
            <person name="Mooijman P."/>
            <person name="Klein Lankhorst R."/>
            <person name="Rose M."/>
            <person name="Hauf J."/>
            <person name="Koetter P."/>
            <person name="Berneiser S."/>
            <person name="Hempel S."/>
            <person name="Feldpausch M."/>
            <person name="Lamberth S."/>
            <person name="Van den Daele H."/>
            <person name="De Keyser A."/>
            <person name="Buysshaert C."/>
            <person name="Gielen J."/>
            <person name="Villarroel R."/>
            <person name="De Clercq R."/>
            <person name="van Montagu M."/>
            <person name="Rogers J."/>
            <person name="Cronin A."/>
            <person name="Quail M.A."/>
            <person name="Bray-Allen S."/>
            <person name="Clark L."/>
            <person name="Doggett J."/>
            <person name="Hall S."/>
            <person name="Kay M."/>
            <person name="Lennard N."/>
            <person name="McLay K."/>
            <person name="Mayes R."/>
            <person name="Pettett A."/>
            <person name="Rajandream M.A."/>
            <person name="Lyne M."/>
            <person name="Benes V."/>
            <person name="Rechmann S."/>
            <person name="Borkova D."/>
            <person name="Bloecker H."/>
            <person name="Scharfe M."/>
            <person name="Grimm M."/>
            <person name="Loehnert T.-H."/>
            <person name="Dose S."/>
            <person name="de Haan M."/>
            <person name="Maarse A.C."/>
            <person name="Schaefer M."/>
            <person name="Mueller-Auer S."/>
            <person name="Gabel C."/>
            <person name="Fuchs M."/>
            <person name="Fartmann B."/>
            <person name="Granderath K."/>
            <person name="Dauner D."/>
            <person name="Herzl A."/>
            <person name="Neumann S."/>
            <person name="Argiriou A."/>
            <person name="Vitale D."/>
            <person name="Liguori R."/>
            <person name="Piravandi E."/>
            <person name="Massenet O."/>
            <person name="Quigley F."/>
            <person name="Clabauld G."/>
            <person name="Muendlein A."/>
            <person name="Felber R."/>
            <person name="Schnabl S."/>
            <person name="Hiller R."/>
            <person name="Schmidt W."/>
            <person name="Lecharny A."/>
            <person name="Aubourg S."/>
            <person name="Chefdor F."/>
            <person name="Cooke R."/>
            <person name="Berger C."/>
            <person name="Monfort A."/>
            <person name="Casacuberta E."/>
            <person name="Gibbons T."/>
            <person name="Weber N."/>
            <person name="Vandenbol M."/>
            <person name="Bargues M."/>
            <person name="Terol J."/>
            <person name="Torres A."/>
            <person name="Perez-Perez A."/>
            <person name="Purnelle B."/>
            <person name="Bent E."/>
            <person name="Johnson S."/>
            <person name="Tacon D."/>
            <person name="Jesse T."/>
            <person name="Heijnen L."/>
            <person name="Schwarz S."/>
            <person name="Scholler P."/>
            <person name="Heber S."/>
            <person name="Francs P."/>
            <person name="Bielke C."/>
            <person name="Frishman D."/>
            <person name="Haase D."/>
            <person name="Lemcke K."/>
            <person name="Mewes H.-W."/>
            <person name="Stocker S."/>
            <person name="Zaccaria P."/>
            <person name="Bevan M."/>
            <person name="Wilson R.K."/>
            <person name="de la Bastide M."/>
            <person name="Habermann K."/>
            <person name="Parnell L."/>
            <person name="Dedhia N."/>
            <person name="Gnoj L."/>
            <person name="Schutz K."/>
            <person name="Huang E."/>
            <person name="Spiegel L."/>
            <person name="Sekhon M."/>
            <person name="Murray J."/>
            <person name="Sheet P."/>
            <person name="Cordes M."/>
            <person name="Abu-Threideh J."/>
            <person name="Stoneking T."/>
            <person name="Kalicki J."/>
            <person name="Graves T."/>
            <person name="Harmon G."/>
            <person name="Edwards J."/>
            <person name="Latreille P."/>
            <person name="Courtney L."/>
            <person name="Cloud J."/>
            <person name="Abbott A."/>
            <person name="Scott K."/>
            <person name="Johnson D."/>
            <person name="Minx P."/>
            <person name="Bentley D."/>
            <person name="Fulton B."/>
            <person name="Miller N."/>
            <person name="Greco T."/>
            <person name="Kemp K."/>
            <person name="Kramer J."/>
            <person name="Fulton L."/>
            <person name="Mardis E."/>
            <person name="Dante M."/>
            <person name="Pepin K."/>
            <person name="Hillier L.W."/>
            <person name="Nelson J."/>
            <person name="Spieth J."/>
            <person name="Ryan E."/>
            <person name="Andrews S."/>
            <person name="Geisel C."/>
            <person name="Layman D."/>
            <person name="Du H."/>
            <person name="Ali J."/>
            <person name="Berghoff A."/>
            <person name="Jones K."/>
            <person name="Drone K."/>
            <person name="Cotton M."/>
            <person name="Joshu C."/>
            <person name="Antonoiu B."/>
            <person name="Zidanic M."/>
            <person name="Strong C."/>
            <person name="Sun H."/>
            <person name="Lamar B."/>
            <person name="Yordan C."/>
            <person name="Ma P."/>
            <person name="Zhong J."/>
            <person name="Preston R."/>
            <person name="Vil D."/>
            <person name="Shekher M."/>
            <person name="Matero A."/>
            <person name="Shah R."/>
            <person name="Swaby I.K."/>
            <person name="O'Shaughnessy A."/>
            <person name="Rodriguez M."/>
            <person name="Hoffman J."/>
            <person name="Till S."/>
            <person name="Granat S."/>
            <person name="Shohdy N."/>
            <person name="Hasegawa A."/>
            <person name="Hameed A."/>
            <person name="Lodhi M."/>
            <person name="Johnson A."/>
            <person name="Chen E."/>
            <person name="Marra M.A."/>
            <person name="Martienssen R."/>
            <person name="McCombie W.R."/>
        </authorList>
    </citation>
    <scope>NUCLEOTIDE SEQUENCE [LARGE SCALE GENOMIC DNA]</scope>
    <source>
        <strain>cv. Columbia</strain>
    </source>
</reference>
<reference key="3">
    <citation type="journal article" date="2017" name="Plant J.">
        <title>Araport11: a complete reannotation of the Arabidopsis thaliana reference genome.</title>
        <authorList>
            <person name="Cheng C.Y."/>
            <person name="Krishnakumar V."/>
            <person name="Chan A.P."/>
            <person name="Thibaud-Nissen F."/>
            <person name="Schobel S."/>
            <person name="Town C.D."/>
        </authorList>
    </citation>
    <scope>GENOME REANNOTATION</scope>
    <source>
        <strain>cv. Columbia</strain>
    </source>
</reference>
<reference key="4">
    <citation type="journal article" date="2004" name="Genome Res.">
        <title>Whole genome sequence comparisons and 'full-length' cDNA sequences: a combined approach to evaluate and improve Arabidopsis genome annotation.</title>
        <authorList>
            <person name="Castelli V."/>
            <person name="Aury J.-M."/>
            <person name="Jaillon O."/>
            <person name="Wincker P."/>
            <person name="Clepet C."/>
            <person name="Menard M."/>
            <person name="Cruaud C."/>
            <person name="Quetier F."/>
            <person name="Scarpelli C."/>
            <person name="Schaechter V."/>
            <person name="Temple G."/>
            <person name="Caboche M."/>
            <person name="Weissenbach J."/>
            <person name="Salanoubat M."/>
        </authorList>
    </citation>
    <scope>NUCLEOTIDE SEQUENCE [LARGE SCALE MRNA]</scope>
    <source>
        <strain>cv. Columbia</strain>
    </source>
</reference>
<reference key="5">
    <citation type="journal article" date="2001" name="J. Biol. Chem.">
        <title>Phylogenetic analysis of the UDP-glycosyltransferase multigene family of Arabidopsis thaliana.</title>
        <authorList>
            <person name="Li Y."/>
            <person name="Baldauf S."/>
            <person name="Lim E.K."/>
            <person name="Bowles D.J."/>
        </authorList>
    </citation>
    <scope>GENE FAMILY</scope>
</reference>
<dbReference type="EC" id="2.4.1.-"/>
<dbReference type="EMBL" id="Z99708">
    <property type="protein sequence ID" value="CAB16822.1"/>
    <property type="molecule type" value="Genomic_DNA"/>
</dbReference>
<dbReference type="EMBL" id="AL161590">
    <property type="protein sequence ID" value="CAB80343.1"/>
    <property type="molecule type" value="Genomic_DNA"/>
</dbReference>
<dbReference type="EMBL" id="CP002687">
    <property type="protein sequence ID" value="AEE86699.1"/>
    <property type="molecule type" value="Genomic_DNA"/>
</dbReference>
<dbReference type="EMBL" id="BX826424">
    <property type="status" value="NOT_ANNOTATED_CDS"/>
    <property type="molecule type" value="mRNA"/>
</dbReference>
<dbReference type="PIR" id="C85434">
    <property type="entry name" value="C85434"/>
</dbReference>
<dbReference type="RefSeq" id="NP_195395.4">
    <property type="nucleotide sequence ID" value="NM_119841.6"/>
</dbReference>
<dbReference type="SMR" id="O23205"/>
<dbReference type="FunCoup" id="O23205">
    <property type="interactions" value="175"/>
</dbReference>
<dbReference type="STRING" id="3702.O23205"/>
<dbReference type="CAZy" id="GT1">
    <property type="family name" value="Glycosyltransferase Family 1"/>
</dbReference>
<dbReference type="PaxDb" id="3702-AT4G36770.1"/>
<dbReference type="ProteomicsDB" id="228709"/>
<dbReference type="DNASU" id="829830"/>
<dbReference type="EnsemblPlants" id="AT4G36770.1">
    <property type="protein sequence ID" value="AT4G36770.1"/>
    <property type="gene ID" value="AT4G36770"/>
</dbReference>
<dbReference type="GeneID" id="829830"/>
<dbReference type="Gramene" id="AT4G36770.1">
    <property type="protein sequence ID" value="AT4G36770.1"/>
    <property type="gene ID" value="AT4G36770"/>
</dbReference>
<dbReference type="KEGG" id="ath:AT4G36770"/>
<dbReference type="Araport" id="AT4G36770"/>
<dbReference type="TAIR" id="AT4G36770"/>
<dbReference type="eggNOG" id="KOG1192">
    <property type="taxonomic scope" value="Eukaryota"/>
</dbReference>
<dbReference type="HOGENOM" id="CLU_001724_3_2_1"/>
<dbReference type="InParanoid" id="O23205"/>
<dbReference type="OMA" id="VFVNTWH"/>
<dbReference type="BioCyc" id="ARA:AT4G36770-MONOMER"/>
<dbReference type="PRO" id="PR:O23205"/>
<dbReference type="Proteomes" id="UP000006548">
    <property type="component" value="Chromosome 4"/>
</dbReference>
<dbReference type="ExpressionAtlas" id="O23205">
    <property type="expression patterns" value="baseline and differential"/>
</dbReference>
<dbReference type="GO" id="GO:0008194">
    <property type="term" value="F:UDP-glycosyltransferase activity"/>
    <property type="evidence" value="ECO:0007669"/>
    <property type="project" value="InterPro"/>
</dbReference>
<dbReference type="CDD" id="cd03784">
    <property type="entry name" value="GT1_Gtf-like"/>
    <property type="match status" value="1"/>
</dbReference>
<dbReference type="FunFam" id="3.40.50.2000:FF:000051">
    <property type="entry name" value="Glycosyltransferase"/>
    <property type="match status" value="1"/>
</dbReference>
<dbReference type="FunFam" id="3.40.50.2000:FF:000558">
    <property type="entry name" value="Glycosyltransferase"/>
    <property type="match status" value="1"/>
</dbReference>
<dbReference type="Gene3D" id="3.40.50.2000">
    <property type="entry name" value="Glycogen Phosphorylase B"/>
    <property type="match status" value="2"/>
</dbReference>
<dbReference type="InterPro" id="IPR002213">
    <property type="entry name" value="UDP_glucos_trans"/>
</dbReference>
<dbReference type="InterPro" id="IPR035595">
    <property type="entry name" value="UDP_glycos_trans_CS"/>
</dbReference>
<dbReference type="PANTHER" id="PTHR48046">
    <property type="entry name" value="UDP-GLYCOSYLTRANSFERASE 72E1"/>
    <property type="match status" value="1"/>
</dbReference>
<dbReference type="PANTHER" id="PTHR48046:SF7">
    <property type="entry name" value="UDP-GLYCOSYLTRANSFERASE 72E1"/>
    <property type="match status" value="1"/>
</dbReference>
<dbReference type="Pfam" id="PF00201">
    <property type="entry name" value="UDPGT"/>
    <property type="match status" value="1"/>
</dbReference>
<dbReference type="SUPFAM" id="SSF53756">
    <property type="entry name" value="UDP-Glycosyltransferase/glycogen phosphorylase"/>
    <property type="match status" value="1"/>
</dbReference>
<dbReference type="PROSITE" id="PS00375">
    <property type="entry name" value="UDPGT"/>
    <property type="match status" value="1"/>
</dbReference>
<organism>
    <name type="scientific">Arabidopsis thaliana</name>
    <name type="common">Mouse-ear cress</name>
    <dbReference type="NCBI Taxonomy" id="3702"/>
    <lineage>
        <taxon>Eukaryota</taxon>
        <taxon>Viridiplantae</taxon>
        <taxon>Streptophyta</taxon>
        <taxon>Embryophyta</taxon>
        <taxon>Tracheophyta</taxon>
        <taxon>Spermatophyta</taxon>
        <taxon>Magnoliopsida</taxon>
        <taxon>eudicotyledons</taxon>
        <taxon>Gunneridae</taxon>
        <taxon>Pentapetalae</taxon>
        <taxon>rosids</taxon>
        <taxon>malvids</taxon>
        <taxon>Brassicales</taxon>
        <taxon>Brassicaceae</taxon>
        <taxon>Camelineae</taxon>
        <taxon>Arabidopsis</taxon>
    </lineage>
</organism>
<sequence length="457" mass="50814">MELHGALVASPGMGHAVPILELGKHLLNHHGFDRVTVFLVTDDVSRSKSLIGKTLMEEDPKFVIRFIPLDVSGQDLSGSLLTKLAEMMRKALPEIKSSVMELEPRPRVFVVDLLGTEALEVAKELGIMRKHVLVTTSAWFLAFTVYMASLDKQELYKQLSSIGALLIPGCSPVKFERAQDPRKYIRELAESQRIGDEVITADGVFVNTWHSLEQVTIGSFLDPENLGRVMRGVPVYPVGPLVRPAEPGLKHGVLDWLDLQPKESVVYVSFGSGGALTFEQTNELAYGLELTGHRFVWVVRPPAEDDPSASMFDKTKNETEPLDFLPNGFLDRTKDIGLVVRTWAPQEEILAHKSTGGFVTHCGWNSVLESIVNGVPMVAWPLYSEQKMNARMVSGELKIALQINVADGIVKKEVIAEMVKRVMDEEEGKEMRKNVKELKKTAEEALNMTHIPSAYFT</sequence>
<proteinExistence type="evidence at transcript level"/>
<accession>O23205</accession>
<name>U72C1_ARATH</name>
<evidence type="ECO:0000250" key="1">
    <source>
        <dbReference type="UniProtKB" id="Q9M156"/>
    </source>
</evidence>
<evidence type="ECO:0000305" key="2"/>
<protein>
    <recommendedName>
        <fullName>UDP-glycosyltransferase 72C1</fullName>
        <ecNumber>2.4.1.-</ecNumber>
    </recommendedName>
</protein>
<comment type="similarity">
    <text evidence="2">Belongs to the UDP-glycosyltransferase family.</text>
</comment>
<comment type="sequence caution" evidence="2">
    <conflict type="miscellaneous discrepancy">
        <sequence resource="EMBL" id="BX826424"/>
    </conflict>
    <text>Sequencing errors.</text>
</comment>